<organism>
    <name type="scientific">Escherichia coli O17:K52:H18 (strain UMN026 / ExPEC)</name>
    <dbReference type="NCBI Taxonomy" id="585056"/>
    <lineage>
        <taxon>Bacteria</taxon>
        <taxon>Pseudomonadati</taxon>
        <taxon>Pseudomonadota</taxon>
        <taxon>Gammaproteobacteria</taxon>
        <taxon>Enterobacterales</taxon>
        <taxon>Enterobacteriaceae</taxon>
        <taxon>Escherichia</taxon>
    </lineage>
</organism>
<dbReference type="EC" id="2.1.2.10" evidence="1"/>
<dbReference type="EMBL" id="CU928163">
    <property type="protein sequence ID" value="CAR14410.1"/>
    <property type="molecule type" value="Genomic_DNA"/>
</dbReference>
<dbReference type="RefSeq" id="WP_000068693.1">
    <property type="nucleotide sequence ID" value="NC_011751.1"/>
</dbReference>
<dbReference type="RefSeq" id="YP_002413929.1">
    <property type="nucleotide sequence ID" value="NC_011751.1"/>
</dbReference>
<dbReference type="SMR" id="B7N7E8"/>
<dbReference type="STRING" id="585056.ECUMN_3246"/>
<dbReference type="KEGG" id="eum:ECUMN_3246"/>
<dbReference type="PATRIC" id="fig|585056.7.peg.3423"/>
<dbReference type="HOGENOM" id="CLU_007884_10_2_6"/>
<dbReference type="Proteomes" id="UP000007097">
    <property type="component" value="Chromosome"/>
</dbReference>
<dbReference type="GO" id="GO:0005829">
    <property type="term" value="C:cytosol"/>
    <property type="evidence" value="ECO:0007669"/>
    <property type="project" value="TreeGrafter"/>
</dbReference>
<dbReference type="GO" id="GO:0005960">
    <property type="term" value="C:glycine cleavage complex"/>
    <property type="evidence" value="ECO:0007669"/>
    <property type="project" value="InterPro"/>
</dbReference>
<dbReference type="GO" id="GO:0004047">
    <property type="term" value="F:aminomethyltransferase activity"/>
    <property type="evidence" value="ECO:0007669"/>
    <property type="project" value="UniProtKB-UniRule"/>
</dbReference>
<dbReference type="GO" id="GO:0008483">
    <property type="term" value="F:transaminase activity"/>
    <property type="evidence" value="ECO:0007669"/>
    <property type="project" value="UniProtKB-KW"/>
</dbReference>
<dbReference type="GO" id="GO:0019464">
    <property type="term" value="P:glycine decarboxylation via glycine cleavage system"/>
    <property type="evidence" value="ECO:0007669"/>
    <property type="project" value="UniProtKB-UniRule"/>
</dbReference>
<dbReference type="FunFam" id="2.40.30.110:FF:000001">
    <property type="entry name" value="Aminomethyltransferase"/>
    <property type="match status" value="1"/>
</dbReference>
<dbReference type="FunFam" id="3.30.70.1400:FF:000001">
    <property type="entry name" value="Aminomethyltransferase"/>
    <property type="match status" value="1"/>
</dbReference>
<dbReference type="FunFam" id="4.10.1250.10:FF:000001">
    <property type="entry name" value="Aminomethyltransferase"/>
    <property type="match status" value="1"/>
</dbReference>
<dbReference type="Gene3D" id="2.40.30.110">
    <property type="entry name" value="Aminomethyltransferase beta-barrel domains"/>
    <property type="match status" value="1"/>
</dbReference>
<dbReference type="Gene3D" id="3.30.70.1400">
    <property type="entry name" value="Aminomethyltransferase beta-barrel domains"/>
    <property type="match status" value="1"/>
</dbReference>
<dbReference type="Gene3D" id="4.10.1250.10">
    <property type="entry name" value="Aminomethyltransferase fragment"/>
    <property type="match status" value="1"/>
</dbReference>
<dbReference type="Gene3D" id="3.30.1360.120">
    <property type="entry name" value="Probable tRNA modification gtpase trme, domain 1"/>
    <property type="match status" value="1"/>
</dbReference>
<dbReference type="HAMAP" id="MF_00259">
    <property type="entry name" value="GcvT"/>
    <property type="match status" value="1"/>
</dbReference>
<dbReference type="InterPro" id="IPR006223">
    <property type="entry name" value="GCS_T"/>
</dbReference>
<dbReference type="InterPro" id="IPR022903">
    <property type="entry name" value="GCS_T_bac"/>
</dbReference>
<dbReference type="InterPro" id="IPR013977">
    <property type="entry name" value="GCST_C"/>
</dbReference>
<dbReference type="InterPro" id="IPR006222">
    <property type="entry name" value="GCV_T_N"/>
</dbReference>
<dbReference type="InterPro" id="IPR028896">
    <property type="entry name" value="GcvT/YgfZ/DmdA"/>
</dbReference>
<dbReference type="InterPro" id="IPR029043">
    <property type="entry name" value="GcvT/YgfZ_C"/>
</dbReference>
<dbReference type="InterPro" id="IPR027266">
    <property type="entry name" value="TrmE/GcvT_dom1"/>
</dbReference>
<dbReference type="NCBIfam" id="TIGR00528">
    <property type="entry name" value="gcvT"/>
    <property type="match status" value="1"/>
</dbReference>
<dbReference type="NCBIfam" id="NF001567">
    <property type="entry name" value="PRK00389.1"/>
    <property type="match status" value="1"/>
</dbReference>
<dbReference type="PANTHER" id="PTHR43757">
    <property type="entry name" value="AMINOMETHYLTRANSFERASE"/>
    <property type="match status" value="1"/>
</dbReference>
<dbReference type="PANTHER" id="PTHR43757:SF2">
    <property type="entry name" value="AMINOMETHYLTRANSFERASE, MITOCHONDRIAL"/>
    <property type="match status" value="1"/>
</dbReference>
<dbReference type="Pfam" id="PF01571">
    <property type="entry name" value="GCV_T"/>
    <property type="match status" value="1"/>
</dbReference>
<dbReference type="Pfam" id="PF08669">
    <property type="entry name" value="GCV_T_C"/>
    <property type="match status" value="1"/>
</dbReference>
<dbReference type="PIRSF" id="PIRSF006487">
    <property type="entry name" value="GcvT"/>
    <property type="match status" value="1"/>
</dbReference>
<dbReference type="SUPFAM" id="SSF101790">
    <property type="entry name" value="Aminomethyltransferase beta-barrel domain"/>
    <property type="match status" value="1"/>
</dbReference>
<dbReference type="SUPFAM" id="SSF103025">
    <property type="entry name" value="Folate-binding domain"/>
    <property type="match status" value="1"/>
</dbReference>
<proteinExistence type="inferred from homology"/>
<feature type="chain" id="PRO_1000119200" description="Aminomethyltransferase">
    <location>
        <begin position="1"/>
        <end position="364"/>
    </location>
</feature>
<accession>B7N7E8</accession>
<keyword id="KW-0032">Aminotransferase</keyword>
<keyword id="KW-0808">Transferase</keyword>
<evidence type="ECO:0000255" key="1">
    <source>
        <dbReference type="HAMAP-Rule" id="MF_00259"/>
    </source>
</evidence>
<name>GCST_ECOLU</name>
<comment type="function">
    <text evidence="1">The glycine cleavage system catalyzes the degradation of glycine.</text>
</comment>
<comment type="catalytic activity">
    <reaction evidence="1">
        <text>N(6)-[(R)-S(8)-aminomethyldihydrolipoyl]-L-lysyl-[protein] + (6S)-5,6,7,8-tetrahydrofolate = N(6)-[(R)-dihydrolipoyl]-L-lysyl-[protein] + (6R)-5,10-methylene-5,6,7,8-tetrahydrofolate + NH4(+)</text>
        <dbReference type="Rhea" id="RHEA:16945"/>
        <dbReference type="Rhea" id="RHEA-COMP:10475"/>
        <dbReference type="Rhea" id="RHEA-COMP:10492"/>
        <dbReference type="ChEBI" id="CHEBI:15636"/>
        <dbReference type="ChEBI" id="CHEBI:28938"/>
        <dbReference type="ChEBI" id="CHEBI:57453"/>
        <dbReference type="ChEBI" id="CHEBI:83100"/>
        <dbReference type="ChEBI" id="CHEBI:83143"/>
        <dbReference type="EC" id="2.1.2.10"/>
    </reaction>
</comment>
<comment type="subunit">
    <text evidence="1">The glycine cleavage system is composed of four proteins: P, T, L and H.</text>
</comment>
<comment type="similarity">
    <text evidence="1">Belongs to the GcvT family.</text>
</comment>
<sequence length="364" mass="40105">MAQQTPLYEQHTLCGARMVDFHGWMMPLHYGSQIDEHHAVRTDAGMFDVSHMTIVDLRGSRTREFLRYLLANDVAKLTKSGKALYSGMLNASGGVIDDLIVYYFSEDFFRLVVNSATREKDLSWITQHAEPFGIEITVRDDLSMIAVQGPNAQAKAATLFNDAQRQAVEGMKPFFGVQAGDLFIATTGYTGEAGYEIALPNEKAADFWRALVEAGVKPCGLGARDTLRLEAGMNLYGQEMDETISPLAANMGWTIAWEPADRDFIGREALEAQREHGTEKLVGLVMTEKGVLRNELPVRFTDAQGNQHEGIITSGTFSPTLGYSIALARVPEGIGETAIVQIRNREMPVKVTKPVFVRNGKAVA</sequence>
<protein>
    <recommendedName>
        <fullName evidence="1">Aminomethyltransferase</fullName>
        <ecNumber evidence="1">2.1.2.10</ecNumber>
    </recommendedName>
    <alternativeName>
        <fullName evidence="1">Glycine cleavage system T protein</fullName>
    </alternativeName>
</protein>
<reference key="1">
    <citation type="journal article" date="2009" name="PLoS Genet.">
        <title>Organised genome dynamics in the Escherichia coli species results in highly diverse adaptive paths.</title>
        <authorList>
            <person name="Touchon M."/>
            <person name="Hoede C."/>
            <person name="Tenaillon O."/>
            <person name="Barbe V."/>
            <person name="Baeriswyl S."/>
            <person name="Bidet P."/>
            <person name="Bingen E."/>
            <person name="Bonacorsi S."/>
            <person name="Bouchier C."/>
            <person name="Bouvet O."/>
            <person name="Calteau A."/>
            <person name="Chiapello H."/>
            <person name="Clermont O."/>
            <person name="Cruveiller S."/>
            <person name="Danchin A."/>
            <person name="Diard M."/>
            <person name="Dossat C."/>
            <person name="Karoui M.E."/>
            <person name="Frapy E."/>
            <person name="Garry L."/>
            <person name="Ghigo J.M."/>
            <person name="Gilles A.M."/>
            <person name="Johnson J."/>
            <person name="Le Bouguenec C."/>
            <person name="Lescat M."/>
            <person name="Mangenot S."/>
            <person name="Martinez-Jehanne V."/>
            <person name="Matic I."/>
            <person name="Nassif X."/>
            <person name="Oztas S."/>
            <person name="Petit M.A."/>
            <person name="Pichon C."/>
            <person name="Rouy Z."/>
            <person name="Ruf C.S."/>
            <person name="Schneider D."/>
            <person name="Tourret J."/>
            <person name="Vacherie B."/>
            <person name="Vallenet D."/>
            <person name="Medigue C."/>
            <person name="Rocha E.P.C."/>
            <person name="Denamur E."/>
        </authorList>
    </citation>
    <scope>NUCLEOTIDE SEQUENCE [LARGE SCALE GENOMIC DNA]</scope>
    <source>
        <strain>UMN026 / ExPEC</strain>
    </source>
</reference>
<gene>
    <name evidence="1" type="primary">gcvT</name>
    <name type="ordered locus">ECUMN_3246</name>
</gene>